<reference key="1">
    <citation type="journal article" date="2004" name="Proc. Natl. Acad. Sci. U.S.A.">
        <title>Insights into the evolution of Yersinia pestis through whole-genome comparison with Yersinia pseudotuberculosis.</title>
        <authorList>
            <person name="Chain P.S.G."/>
            <person name="Carniel E."/>
            <person name="Larimer F.W."/>
            <person name="Lamerdin J."/>
            <person name="Stoutland P.O."/>
            <person name="Regala W.M."/>
            <person name="Georgescu A.M."/>
            <person name="Vergez L.M."/>
            <person name="Land M.L."/>
            <person name="Motin V.L."/>
            <person name="Brubaker R.R."/>
            <person name="Fowler J."/>
            <person name="Hinnebusch J."/>
            <person name="Marceau M."/>
            <person name="Medigue C."/>
            <person name="Simonet M."/>
            <person name="Chenal-Francisque V."/>
            <person name="Souza B."/>
            <person name="Dacheux D."/>
            <person name="Elliott J.M."/>
            <person name="Derbise A."/>
            <person name="Hauser L.J."/>
            <person name="Garcia E."/>
        </authorList>
    </citation>
    <scope>NUCLEOTIDE SEQUENCE [LARGE SCALE GENOMIC DNA]</scope>
    <source>
        <strain>IP32953</strain>
    </source>
</reference>
<sequence>MSLLPVMVIFGLSFPPIFLELLISLALFFVVRRILQPTGIYEFVWHPALFNTALYCCLFYLTSRLFS</sequence>
<dbReference type="EMBL" id="BX936398">
    <property type="protein sequence ID" value="CAH22786.1"/>
    <property type="molecule type" value="Genomic_DNA"/>
</dbReference>
<dbReference type="RefSeq" id="WP_002210093.1">
    <property type="nucleotide sequence ID" value="NZ_CP009712.1"/>
</dbReference>
<dbReference type="GeneID" id="57975109"/>
<dbReference type="KEGG" id="ypo:BZ17_3053"/>
<dbReference type="KEGG" id="yps:YPTB3548"/>
<dbReference type="PATRIC" id="fig|273123.14.peg.3199"/>
<dbReference type="Proteomes" id="UP000001011">
    <property type="component" value="Chromosome"/>
</dbReference>
<dbReference type="GO" id="GO:0005886">
    <property type="term" value="C:plasma membrane"/>
    <property type="evidence" value="ECO:0007669"/>
    <property type="project" value="UniProtKB-SubCell"/>
</dbReference>
<dbReference type="HAMAP" id="MF_01546">
    <property type="entry name" value="AaeX"/>
    <property type="match status" value="1"/>
</dbReference>
<dbReference type="InterPro" id="IPR012451">
    <property type="entry name" value="DUF1656"/>
</dbReference>
<dbReference type="NCBIfam" id="NF008615">
    <property type="entry name" value="PRK11594.1"/>
    <property type="match status" value="1"/>
</dbReference>
<dbReference type="Pfam" id="PF07869">
    <property type="entry name" value="DUF1656"/>
    <property type="match status" value="1"/>
</dbReference>
<name>AAEX_YERPS</name>
<organism>
    <name type="scientific">Yersinia pseudotuberculosis serotype I (strain IP32953)</name>
    <dbReference type="NCBI Taxonomy" id="273123"/>
    <lineage>
        <taxon>Bacteria</taxon>
        <taxon>Pseudomonadati</taxon>
        <taxon>Pseudomonadota</taxon>
        <taxon>Gammaproteobacteria</taxon>
        <taxon>Enterobacterales</taxon>
        <taxon>Yersiniaceae</taxon>
        <taxon>Yersinia</taxon>
    </lineage>
</organism>
<comment type="subcellular location">
    <subcellularLocation>
        <location evidence="1">Cell membrane</location>
        <topology evidence="1">Multi-pass membrane protein</topology>
    </subcellularLocation>
</comment>
<comment type="similarity">
    <text evidence="1">Belongs to the AaeX family.</text>
</comment>
<proteinExistence type="inferred from homology"/>
<protein>
    <recommendedName>
        <fullName evidence="1">Protein AaeX</fullName>
    </recommendedName>
</protein>
<evidence type="ECO:0000255" key="1">
    <source>
        <dbReference type="HAMAP-Rule" id="MF_01546"/>
    </source>
</evidence>
<keyword id="KW-1003">Cell membrane</keyword>
<keyword id="KW-0472">Membrane</keyword>
<keyword id="KW-0812">Transmembrane</keyword>
<keyword id="KW-1133">Transmembrane helix</keyword>
<accession>Q665H0</accession>
<gene>
    <name evidence="1" type="primary">aaeX</name>
    <name type="ordered locus">YPTB3548</name>
</gene>
<feature type="chain" id="PRO_0000215058" description="Protein AaeX">
    <location>
        <begin position="1"/>
        <end position="67"/>
    </location>
</feature>
<feature type="transmembrane region" description="Helical" evidence="1">
    <location>
        <begin position="3"/>
        <end position="23"/>
    </location>
</feature>
<feature type="transmembrane region" description="Helical" evidence="1">
    <location>
        <begin position="39"/>
        <end position="59"/>
    </location>
</feature>